<feature type="chain" id="PRO_0000071071" description="J domain-containing protein">
    <location>
        <begin position="1"/>
        <end position="170"/>
    </location>
</feature>
<feature type="domain" description="J" evidence="1">
    <location>
        <begin position="17"/>
        <end position="82"/>
    </location>
</feature>
<feature type="region of interest" description="Disordered" evidence="2">
    <location>
        <begin position="101"/>
        <end position="170"/>
    </location>
</feature>
<feature type="compositionally biased region" description="Basic and acidic residues" evidence="2">
    <location>
        <begin position="110"/>
        <end position="120"/>
    </location>
</feature>
<feature type="compositionally biased region" description="Low complexity" evidence="2">
    <location>
        <begin position="121"/>
        <end position="135"/>
    </location>
</feature>
<feature type="compositionally biased region" description="Low complexity" evidence="2">
    <location>
        <begin position="142"/>
        <end position="153"/>
    </location>
</feature>
<organism>
    <name type="scientific">Manduca sexta</name>
    <name type="common">Tobacco hawkmoth</name>
    <name type="synonym">Tobacco hornworm</name>
    <dbReference type="NCBI Taxonomy" id="7130"/>
    <lineage>
        <taxon>Eukaryota</taxon>
        <taxon>Metazoa</taxon>
        <taxon>Ecdysozoa</taxon>
        <taxon>Arthropoda</taxon>
        <taxon>Hexapoda</taxon>
        <taxon>Insecta</taxon>
        <taxon>Pterygota</taxon>
        <taxon>Neoptera</taxon>
        <taxon>Endopterygota</taxon>
        <taxon>Lepidoptera</taxon>
        <taxon>Glossata</taxon>
        <taxon>Ditrysia</taxon>
        <taxon>Bombycoidea</taxon>
        <taxon>Sphingidae</taxon>
        <taxon>Sphinginae</taxon>
        <taxon>Sphingini</taxon>
        <taxon>Manduca</taxon>
    </lineage>
</organism>
<accession>Q9U6V6</accession>
<keyword id="KW-0143">Chaperone</keyword>
<gene>
    <name type="primary">jdp</name>
</gene>
<evidence type="ECO:0000255" key="1">
    <source>
        <dbReference type="PROSITE-ProRule" id="PRU00286"/>
    </source>
</evidence>
<evidence type="ECO:0000256" key="2">
    <source>
        <dbReference type="SAM" id="MobiDB-lite"/>
    </source>
</evidence>
<name>JDP_MANSE</name>
<sequence>MTGVDEILNYKRNPDDDYYALLGCDENSTVEQITAEYKVLALQYHPDKNDGDKEAEAKFQQLKEAKETLCEPSKRALYDKWRQSGIAMGFKQWLGMKDHVQQSMHWSKPNTKDRMLEGEPGKPSGPSSLGPSNPGARRASEGGAALWGRWGAGNQEPPSEVISKFRNYEI</sequence>
<reference key="1">
    <citation type="journal article" date="2000" name="Biochim. Biophys. Acta">
        <title>Characterization of JDP genes, an evolutionarily conserved J domain-only protein family, from human and moths.</title>
        <authorList>
            <person name="Lee J."/>
            <person name="Hahn Y."/>
            <person name="Yun J.H."/>
            <person name="Mita K."/>
            <person name="Chung J.H."/>
        </authorList>
    </citation>
    <scope>NUCLEOTIDE SEQUENCE [MRNA]</scope>
</reference>
<protein>
    <recommendedName>
        <fullName>J domain-containing protein</fullName>
    </recommendedName>
</protein>
<dbReference type="EMBL" id="AF176015">
    <property type="protein sequence ID" value="AAD52653.1"/>
    <property type="molecule type" value="mRNA"/>
</dbReference>
<dbReference type="SMR" id="Q9U6V6"/>
<dbReference type="EnsemblMetazoa" id="XM_030164741.2">
    <property type="protein sequence ID" value="XP_030020601.1"/>
    <property type="gene ID" value="LOC115440442"/>
</dbReference>
<dbReference type="OrthoDB" id="436519at2759"/>
<dbReference type="GO" id="GO:0005737">
    <property type="term" value="C:cytoplasm"/>
    <property type="evidence" value="ECO:0007669"/>
    <property type="project" value="TreeGrafter"/>
</dbReference>
<dbReference type="CDD" id="cd06257">
    <property type="entry name" value="DnaJ"/>
    <property type="match status" value="1"/>
</dbReference>
<dbReference type="FunFam" id="1.10.287.110:FF:000049">
    <property type="entry name" value="DnaJ homolog subfamily C member 12"/>
    <property type="match status" value="1"/>
</dbReference>
<dbReference type="Gene3D" id="1.10.287.110">
    <property type="entry name" value="DnaJ domain"/>
    <property type="match status" value="1"/>
</dbReference>
<dbReference type="InterPro" id="IPR001623">
    <property type="entry name" value="DnaJ_domain"/>
</dbReference>
<dbReference type="InterPro" id="IPR036869">
    <property type="entry name" value="J_dom_sf"/>
</dbReference>
<dbReference type="InterPro" id="IPR029827">
    <property type="entry name" value="JDP1-like"/>
</dbReference>
<dbReference type="PANTHER" id="PTHR44500">
    <property type="entry name" value="DNAJ HOMOLOG SUBFAMILY C MEMBER 12"/>
    <property type="match status" value="1"/>
</dbReference>
<dbReference type="PANTHER" id="PTHR44500:SF1">
    <property type="entry name" value="DNAJ HOMOLOG SUBFAMILY C MEMBER 12"/>
    <property type="match status" value="1"/>
</dbReference>
<dbReference type="Pfam" id="PF00226">
    <property type="entry name" value="DnaJ"/>
    <property type="match status" value="1"/>
</dbReference>
<dbReference type="PRINTS" id="PR00625">
    <property type="entry name" value="JDOMAIN"/>
</dbReference>
<dbReference type="SMART" id="SM00271">
    <property type="entry name" value="DnaJ"/>
    <property type="match status" value="1"/>
</dbReference>
<dbReference type="SUPFAM" id="SSF46565">
    <property type="entry name" value="Chaperone J-domain"/>
    <property type="match status" value="1"/>
</dbReference>
<dbReference type="PROSITE" id="PS50076">
    <property type="entry name" value="DNAJ_2"/>
    <property type="match status" value="1"/>
</dbReference>
<proteinExistence type="evidence at transcript level"/>